<accession>P52866</accession>
<evidence type="ECO:0000256" key="1">
    <source>
        <dbReference type="SAM" id="MobiDB-lite"/>
    </source>
</evidence>
<evidence type="ECO:0000305" key="2"/>
<protein>
    <recommendedName>
        <fullName evidence="2">Large ribosomal subunit protein eL36</fullName>
    </recommendedName>
    <alternativeName>
        <fullName>60S ribosomal protein L36</fullName>
    </alternativeName>
</protein>
<keyword id="KW-0687">Ribonucleoprotein</keyword>
<keyword id="KW-0689">Ribosomal protein</keyword>
<proteinExistence type="inferred from homology"/>
<reference key="1">
    <citation type="submission" date="1996-04" db="EMBL/GenBank/DDBJ databases">
        <authorList>
            <person name="Lin X."/>
            <person name="Hwang G.J."/>
            <person name="Zimmerman J.L."/>
        </authorList>
    </citation>
    <scope>NUCLEOTIDE SEQUENCE [MRNA]</scope>
    <source>
        <strain>cv. Danvers Half-long</strain>
    </source>
</reference>
<dbReference type="EMBL" id="U47095">
    <property type="protein sequence ID" value="AAB01095.1"/>
    <property type="status" value="ALT_INIT"/>
    <property type="molecule type" value="mRNA"/>
</dbReference>
<dbReference type="GO" id="GO:1990904">
    <property type="term" value="C:ribonucleoprotein complex"/>
    <property type="evidence" value="ECO:0007669"/>
    <property type="project" value="UniProtKB-KW"/>
</dbReference>
<dbReference type="GO" id="GO:0005840">
    <property type="term" value="C:ribosome"/>
    <property type="evidence" value="ECO:0007669"/>
    <property type="project" value="UniProtKB-KW"/>
</dbReference>
<dbReference type="GO" id="GO:0003735">
    <property type="term" value="F:structural constituent of ribosome"/>
    <property type="evidence" value="ECO:0007669"/>
    <property type="project" value="InterPro"/>
</dbReference>
<dbReference type="GO" id="GO:0006412">
    <property type="term" value="P:translation"/>
    <property type="evidence" value="ECO:0007669"/>
    <property type="project" value="InterPro"/>
</dbReference>
<dbReference type="FunFam" id="1.10.10.1760:FF:000001">
    <property type="entry name" value="60S ribosomal protein L36"/>
    <property type="match status" value="1"/>
</dbReference>
<dbReference type="Gene3D" id="1.10.10.1760">
    <property type="entry name" value="60S ribosomal protein L36"/>
    <property type="match status" value="1"/>
</dbReference>
<dbReference type="InterPro" id="IPR000509">
    <property type="entry name" value="Ribosomal_eL36"/>
</dbReference>
<dbReference type="InterPro" id="IPR038097">
    <property type="entry name" value="Ribosomal_eL36_sf"/>
</dbReference>
<dbReference type="PANTHER" id="PTHR10114">
    <property type="entry name" value="60S RIBOSOMAL PROTEIN L36"/>
    <property type="match status" value="1"/>
</dbReference>
<dbReference type="Pfam" id="PF01158">
    <property type="entry name" value="Ribosomal_L36e"/>
    <property type="match status" value="1"/>
</dbReference>
<dbReference type="PROSITE" id="PS01190">
    <property type="entry name" value="RIBOSOMAL_L36E"/>
    <property type="match status" value="1"/>
</dbReference>
<name>RL36_DAUCA</name>
<feature type="chain" id="PRO_0000195015" description="Large ribosomal subunit protein eL36">
    <location>
        <begin position="1"/>
        <end position="106"/>
    </location>
</feature>
<feature type="region of interest" description="Disordered" evidence="1">
    <location>
        <begin position="75"/>
        <end position="106"/>
    </location>
</feature>
<feature type="compositionally biased region" description="Basic and acidic residues" evidence="1">
    <location>
        <begin position="75"/>
        <end position="93"/>
    </location>
</feature>
<organism>
    <name type="scientific">Daucus carota</name>
    <name type="common">Wild carrot</name>
    <dbReference type="NCBI Taxonomy" id="4039"/>
    <lineage>
        <taxon>Eukaryota</taxon>
        <taxon>Viridiplantae</taxon>
        <taxon>Streptophyta</taxon>
        <taxon>Embryophyta</taxon>
        <taxon>Tracheophyta</taxon>
        <taxon>Spermatophyta</taxon>
        <taxon>Magnoliopsida</taxon>
        <taxon>eudicotyledons</taxon>
        <taxon>Gunneridae</taxon>
        <taxon>Pentapetalae</taxon>
        <taxon>asterids</taxon>
        <taxon>campanulids</taxon>
        <taxon>Apiales</taxon>
        <taxon>Apiaceae</taxon>
        <taxon>Apioideae</taxon>
        <taxon>Scandiceae</taxon>
        <taxon>Daucinae</taxon>
        <taxon>Daucus</taxon>
        <taxon>Daucus sect. Daucus</taxon>
    </lineage>
</organism>
<gene>
    <name type="primary">RPL36</name>
</gene>
<comment type="similarity">
    <text evidence="2">Belongs to the eukaryotic ribosomal protein eL36 family.</text>
</comment>
<comment type="sequence caution" evidence="2">
    <conflict type="erroneous initiation">
        <sequence resource="EMBL-CDS" id="AAB01095"/>
    </conflict>
</comment>
<sequence length="106" mass="12251">MAPKQPNTGLFVGLNKGHIVTKKELAPRPSDRKGKTSKRTHFVRNLIREVAGFXPYEKRITELLKVGKDKRALKVRQEKVGHSQESKEEERGDVQCSPPDEGWWWY</sequence>